<reference key="1">
    <citation type="submission" date="2007-06" db="EMBL/GenBank/DDBJ databases">
        <authorList>
            <person name="Dodson R.J."/>
            <person name="Harkins D."/>
            <person name="Paulsen I.T."/>
        </authorList>
    </citation>
    <scope>NUCLEOTIDE SEQUENCE [LARGE SCALE GENOMIC DNA]</scope>
    <source>
        <strain>DSM 24068 / PA7</strain>
    </source>
</reference>
<accession>A6VEC3</accession>
<protein>
    <recommendedName>
        <fullName evidence="1">Large ribosomal subunit protein bL28</fullName>
    </recommendedName>
    <alternativeName>
        <fullName evidence="2">50S ribosomal protein L28</fullName>
    </alternativeName>
</protein>
<gene>
    <name evidence="1" type="primary">rpmB</name>
    <name type="ordered locus">PSPA7_6092</name>
</gene>
<keyword id="KW-0687">Ribonucleoprotein</keyword>
<keyword id="KW-0689">Ribosomal protein</keyword>
<evidence type="ECO:0000255" key="1">
    <source>
        <dbReference type="HAMAP-Rule" id="MF_00373"/>
    </source>
</evidence>
<evidence type="ECO:0000305" key="2"/>
<dbReference type="EMBL" id="CP000744">
    <property type="protein sequence ID" value="ABR86350.1"/>
    <property type="molecule type" value="Genomic_DNA"/>
</dbReference>
<dbReference type="RefSeq" id="WP_003096556.1">
    <property type="nucleotide sequence ID" value="NC_009656.1"/>
</dbReference>
<dbReference type="SMR" id="A6VEC3"/>
<dbReference type="GeneID" id="77223849"/>
<dbReference type="KEGG" id="pap:PSPA7_6092"/>
<dbReference type="HOGENOM" id="CLU_064548_3_1_6"/>
<dbReference type="Proteomes" id="UP000001582">
    <property type="component" value="Chromosome"/>
</dbReference>
<dbReference type="GO" id="GO:0022625">
    <property type="term" value="C:cytosolic large ribosomal subunit"/>
    <property type="evidence" value="ECO:0007669"/>
    <property type="project" value="TreeGrafter"/>
</dbReference>
<dbReference type="GO" id="GO:0003735">
    <property type="term" value="F:structural constituent of ribosome"/>
    <property type="evidence" value="ECO:0007669"/>
    <property type="project" value="InterPro"/>
</dbReference>
<dbReference type="GO" id="GO:0006412">
    <property type="term" value="P:translation"/>
    <property type="evidence" value="ECO:0007669"/>
    <property type="project" value="UniProtKB-UniRule"/>
</dbReference>
<dbReference type="FunFam" id="2.30.170.40:FF:000001">
    <property type="entry name" value="50S ribosomal protein L28"/>
    <property type="match status" value="1"/>
</dbReference>
<dbReference type="Gene3D" id="2.30.170.40">
    <property type="entry name" value="Ribosomal protein L28/L24"/>
    <property type="match status" value="1"/>
</dbReference>
<dbReference type="HAMAP" id="MF_00373">
    <property type="entry name" value="Ribosomal_bL28"/>
    <property type="match status" value="1"/>
</dbReference>
<dbReference type="InterPro" id="IPR026569">
    <property type="entry name" value="Ribosomal_bL28"/>
</dbReference>
<dbReference type="InterPro" id="IPR034704">
    <property type="entry name" value="Ribosomal_bL28/bL31-like_sf"/>
</dbReference>
<dbReference type="InterPro" id="IPR001383">
    <property type="entry name" value="Ribosomal_bL28_bact-type"/>
</dbReference>
<dbReference type="InterPro" id="IPR037147">
    <property type="entry name" value="Ribosomal_bL28_sf"/>
</dbReference>
<dbReference type="NCBIfam" id="TIGR00009">
    <property type="entry name" value="L28"/>
    <property type="match status" value="1"/>
</dbReference>
<dbReference type="PANTHER" id="PTHR13528">
    <property type="entry name" value="39S RIBOSOMAL PROTEIN L28, MITOCHONDRIAL"/>
    <property type="match status" value="1"/>
</dbReference>
<dbReference type="PANTHER" id="PTHR13528:SF2">
    <property type="entry name" value="LARGE RIBOSOMAL SUBUNIT PROTEIN BL28M"/>
    <property type="match status" value="1"/>
</dbReference>
<dbReference type="Pfam" id="PF00830">
    <property type="entry name" value="Ribosomal_L28"/>
    <property type="match status" value="1"/>
</dbReference>
<dbReference type="SUPFAM" id="SSF143800">
    <property type="entry name" value="L28p-like"/>
    <property type="match status" value="1"/>
</dbReference>
<organism>
    <name type="scientific">Pseudomonas paraeruginosa (strain DSM 24068 / PA7)</name>
    <name type="common">Pseudomonas aeruginosa (strain PA7)</name>
    <dbReference type="NCBI Taxonomy" id="381754"/>
    <lineage>
        <taxon>Bacteria</taxon>
        <taxon>Pseudomonadati</taxon>
        <taxon>Pseudomonadota</taxon>
        <taxon>Gammaproteobacteria</taxon>
        <taxon>Pseudomonadales</taxon>
        <taxon>Pseudomonadaceae</taxon>
        <taxon>Pseudomonas</taxon>
        <taxon>Pseudomonas paraeruginosa</taxon>
    </lineage>
</organism>
<name>RL28_PSEP7</name>
<proteinExistence type="inferred from homology"/>
<comment type="similarity">
    <text evidence="1">Belongs to the bacterial ribosomal protein bL28 family.</text>
</comment>
<feature type="chain" id="PRO_1000007311" description="Large ribosomal subunit protein bL28">
    <location>
        <begin position="1"/>
        <end position="78"/>
    </location>
</feature>
<sequence>MSRVCQVTGKGPVTGNNISHAHNKTRRRFLPNLQHHRFWVESEKRFVRLRVSAKGMRIIDKRGIEAVLADLRARGEKF</sequence>